<gene>
    <name evidence="1" type="primary">pepA</name>
    <name type="ordered locus">BCG_2229</name>
</gene>
<reference key="1">
    <citation type="journal article" date="2007" name="Proc. Natl. Acad. Sci. U.S.A.">
        <title>Genome plasticity of BCG and impact on vaccine efficacy.</title>
        <authorList>
            <person name="Brosch R."/>
            <person name="Gordon S.V."/>
            <person name="Garnier T."/>
            <person name="Eiglmeier K."/>
            <person name="Frigui W."/>
            <person name="Valenti P."/>
            <person name="Dos Santos S."/>
            <person name="Duthoy S."/>
            <person name="Lacroix C."/>
            <person name="Garcia-Pelayo C."/>
            <person name="Inwald J.K."/>
            <person name="Golby P."/>
            <person name="Garcia J.N."/>
            <person name="Hewinson R.G."/>
            <person name="Behr M.A."/>
            <person name="Quail M.A."/>
            <person name="Churcher C."/>
            <person name="Barrell B.G."/>
            <person name="Parkhill J."/>
            <person name="Cole S.T."/>
        </authorList>
    </citation>
    <scope>NUCLEOTIDE SEQUENCE [LARGE SCALE GENOMIC DNA]</scope>
    <source>
        <strain>BCG / Pasteur 1173P2</strain>
    </source>
</reference>
<protein>
    <recommendedName>
        <fullName evidence="1">Probable cytosol aminopeptidase</fullName>
        <ecNumber evidence="1">3.4.11.1</ecNumber>
    </recommendedName>
    <alternativeName>
        <fullName evidence="1">Leucine aminopeptidase</fullName>
        <shortName evidence="1">LAP</shortName>
        <ecNumber evidence="1">3.4.11.10</ecNumber>
    </alternativeName>
    <alternativeName>
        <fullName evidence="1">Leucyl aminopeptidase</fullName>
    </alternativeName>
</protein>
<dbReference type="EC" id="3.4.11.1" evidence="1"/>
<dbReference type="EC" id="3.4.11.10" evidence="1"/>
<dbReference type="EMBL" id="AM408590">
    <property type="protein sequence ID" value="CAL72217.1"/>
    <property type="molecule type" value="Genomic_DNA"/>
</dbReference>
<dbReference type="RefSeq" id="WP_003411444.1">
    <property type="nucleotide sequence ID" value="NC_008769.1"/>
</dbReference>
<dbReference type="SMR" id="A1KKQ5"/>
<dbReference type="KEGG" id="mbb:BCG_2229"/>
<dbReference type="HOGENOM" id="CLU_013734_2_2_11"/>
<dbReference type="Proteomes" id="UP000001472">
    <property type="component" value="Chromosome"/>
</dbReference>
<dbReference type="GO" id="GO:0005737">
    <property type="term" value="C:cytoplasm"/>
    <property type="evidence" value="ECO:0007669"/>
    <property type="project" value="UniProtKB-SubCell"/>
</dbReference>
<dbReference type="GO" id="GO:0030145">
    <property type="term" value="F:manganese ion binding"/>
    <property type="evidence" value="ECO:0007669"/>
    <property type="project" value="UniProtKB-UniRule"/>
</dbReference>
<dbReference type="GO" id="GO:0070006">
    <property type="term" value="F:metalloaminopeptidase activity"/>
    <property type="evidence" value="ECO:0007669"/>
    <property type="project" value="InterPro"/>
</dbReference>
<dbReference type="GO" id="GO:0006508">
    <property type="term" value="P:proteolysis"/>
    <property type="evidence" value="ECO:0007669"/>
    <property type="project" value="UniProtKB-KW"/>
</dbReference>
<dbReference type="CDD" id="cd00433">
    <property type="entry name" value="Peptidase_M17"/>
    <property type="match status" value="1"/>
</dbReference>
<dbReference type="FunFam" id="3.40.630.10:FF:000087">
    <property type="entry name" value="Probable cytosol aminopeptidase"/>
    <property type="match status" value="1"/>
</dbReference>
<dbReference type="Gene3D" id="3.40.220.10">
    <property type="entry name" value="Leucine Aminopeptidase, subunit E, domain 1"/>
    <property type="match status" value="1"/>
</dbReference>
<dbReference type="Gene3D" id="3.40.630.10">
    <property type="entry name" value="Zn peptidases"/>
    <property type="match status" value="1"/>
</dbReference>
<dbReference type="HAMAP" id="MF_00181">
    <property type="entry name" value="Cytosol_peptidase_M17"/>
    <property type="match status" value="1"/>
</dbReference>
<dbReference type="InterPro" id="IPR011356">
    <property type="entry name" value="Leucine_aapep/pepB"/>
</dbReference>
<dbReference type="InterPro" id="IPR043472">
    <property type="entry name" value="Macro_dom-like"/>
</dbReference>
<dbReference type="InterPro" id="IPR000819">
    <property type="entry name" value="Peptidase_M17_C"/>
</dbReference>
<dbReference type="InterPro" id="IPR023042">
    <property type="entry name" value="Peptidase_M17_leu_NH2_pept"/>
</dbReference>
<dbReference type="InterPro" id="IPR008283">
    <property type="entry name" value="Peptidase_M17_N"/>
</dbReference>
<dbReference type="NCBIfam" id="NF002073">
    <property type="entry name" value="PRK00913.1-2"/>
    <property type="match status" value="1"/>
</dbReference>
<dbReference type="PANTHER" id="PTHR11963:SF23">
    <property type="entry name" value="CYTOSOL AMINOPEPTIDASE"/>
    <property type="match status" value="1"/>
</dbReference>
<dbReference type="PANTHER" id="PTHR11963">
    <property type="entry name" value="LEUCINE AMINOPEPTIDASE-RELATED"/>
    <property type="match status" value="1"/>
</dbReference>
<dbReference type="Pfam" id="PF00883">
    <property type="entry name" value="Peptidase_M17"/>
    <property type="match status" value="1"/>
</dbReference>
<dbReference type="Pfam" id="PF02789">
    <property type="entry name" value="Peptidase_M17_N"/>
    <property type="match status" value="1"/>
</dbReference>
<dbReference type="PRINTS" id="PR00481">
    <property type="entry name" value="LAMNOPPTDASE"/>
</dbReference>
<dbReference type="SUPFAM" id="SSF52949">
    <property type="entry name" value="Macro domain-like"/>
    <property type="match status" value="1"/>
</dbReference>
<dbReference type="SUPFAM" id="SSF53187">
    <property type="entry name" value="Zn-dependent exopeptidases"/>
    <property type="match status" value="1"/>
</dbReference>
<dbReference type="PROSITE" id="PS00631">
    <property type="entry name" value="CYTOSOL_AP"/>
    <property type="match status" value="1"/>
</dbReference>
<evidence type="ECO:0000255" key="1">
    <source>
        <dbReference type="HAMAP-Rule" id="MF_00181"/>
    </source>
</evidence>
<comment type="function">
    <text evidence="1">Presumably involved in the processing and regular turnover of intracellular proteins. Catalyzes the removal of unsubstituted N-terminal amino acids from various peptides.</text>
</comment>
<comment type="catalytic activity">
    <reaction evidence="1">
        <text>Release of an N-terminal amino acid, Xaa-|-Yaa-, in which Xaa is preferably Leu, but may be other amino acids including Pro although not Arg or Lys, and Yaa may be Pro. Amino acid amides and methyl esters are also readily hydrolyzed, but rates on arylamides are exceedingly low.</text>
        <dbReference type="EC" id="3.4.11.1"/>
    </reaction>
</comment>
<comment type="catalytic activity">
    <reaction evidence="1">
        <text>Release of an N-terminal amino acid, preferentially leucine, but not glutamic or aspartic acids.</text>
        <dbReference type="EC" id="3.4.11.10"/>
    </reaction>
</comment>
<comment type="cofactor">
    <cofactor evidence="1">
        <name>Mn(2+)</name>
        <dbReference type="ChEBI" id="CHEBI:29035"/>
    </cofactor>
    <text evidence="1">Binds 2 manganese ions per subunit.</text>
</comment>
<comment type="subcellular location">
    <subcellularLocation>
        <location evidence="1">Cytoplasm</location>
    </subcellularLocation>
</comment>
<comment type="similarity">
    <text evidence="1">Belongs to the peptidase M17 family.</text>
</comment>
<feature type="chain" id="PRO_1000019936" description="Probable cytosol aminopeptidase">
    <location>
        <begin position="1"/>
        <end position="515"/>
    </location>
</feature>
<feature type="active site" evidence="1">
    <location>
        <position position="291"/>
    </location>
</feature>
<feature type="active site" evidence="1">
    <location>
        <position position="365"/>
    </location>
</feature>
<feature type="binding site" evidence="1">
    <location>
        <position position="279"/>
    </location>
    <ligand>
        <name>Mn(2+)</name>
        <dbReference type="ChEBI" id="CHEBI:29035"/>
        <label>2</label>
    </ligand>
</feature>
<feature type="binding site" evidence="1">
    <location>
        <position position="284"/>
    </location>
    <ligand>
        <name>Mn(2+)</name>
        <dbReference type="ChEBI" id="CHEBI:29035"/>
        <label>1</label>
    </ligand>
</feature>
<feature type="binding site" evidence="1">
    <location>
        <position position="284"/>
    </location>
    <ligand>
        <name>Mn(2+)</name>
        <dbReference type="ChEBI" id="CHEBI:29035"/>
        <label>2</label>
    </ligand>
</feature>
<feature type="binding site" evidence="1">
    <location>
        <position position="302"/>
    </location>
    <ligand>
        <name>Mn(2+)</name>
        <dbReference type="ChEBI" id="CHEBI:29035"/>
        <label>2</label>
    </ligand>
</feature>
<feature type="binding site" evidence="1">
    <location>
        <position position="361"/>
    </location>
    <ligand>
        <name>Mn(2+)</name>
        <dbReference type="ChEBI" id="CHEBI:29035"/>
        <label>1</label>
    </ligand>
</feature>
<feature type="binding site" evidence="1">
    <location>
        <position position="363"/>
    </location>
    <ligand>
        <name>Mn(2+)</name>
        <dbReference type="ChEBI" id="CHEBI:29035"/>
        <label>1</label>
    </ligand>
</feature>
<feature type="binding site" evidence="1">
    <location>
        <position position="363"/>
    </location>
    <ligand>
        <name>Mn(2+)</name>
        <dbReference type="ChEBI" id="CHEBI:29035"/>
        <label>2</label>
    </ligand>
</feature>
<sequence>MTTEPGYLSPSVAVATSMPKRGVGAAVLIVPVVSTGEEDRPGAVVASAEPFLRADTVAEIEAGLRALDATGASDQVHRLAVPSLPVGSVLTVGLGKPRREWPADTIRCAAGVAARALNSSEAVITTLAELPGDGICSATVEGLILGSYRFSAFRSDKTAPKDAGLRKITVLCCAKDAKKRALHGAAVATAVATARDLVNTPPSHLFPAELAKRAKTLSESVGLDVEVIDEKALKKAGYGGVIGVGQGSSRPPRLVRLIHRGSRLAKNPQKAKKVALVGKGITFDTGGISIKPAASMHHMTSDMGGAAAVIATVTLAARLRLPIDVIATVPMAENMPSATAQRPGDVLTQYGGTTVEVLNTDAEGRLILADAIVRACEDKPDYLIETSTLTGAQTVALGTRIPGVMGSDEFRDRVAAISQRVGENGWPMPLPDDLKDDLKSTVADLANVSGQRFAGMLVAGVFLREFVAESVDWAHIDVAGPAYNTGSAWGYTPKGATGVPTRTMFAVLEDIAKNG</sequence>
<name>AMPA_MYCBP</name>
<proteinExistence type="inferred from homology"/>
<accession>A1KKQ5</accession>
<keyword id="KW-0031">Aminopeptidase</keyword>
<keyword id="KW-0963">Cytoplasm</keyword>
<keyword id="KW-0378">Hydrolase</keyword>
<keyword id="KW-0464">Manganese</keyword>
<keyword id="KW-0479">Metal-binding</keyword>
<keyword id="KW-0645">Protease</keyword>
<organism>
    <name type="scientific">Mycobacterium bovis (strain BCG / Pasteur 1173P2)</name>
    <dbReference type="NCBI Taxonomy" id="410289"/>
    <lineage>
        <taxon>Bacteria</taxon>
        <taxon>Bacillati</taxon>
        <taxon>Actinomycetota</taxon>
        <taxon>Actinomycetes</taxon>
        <taxon>Mycobacteriales</taxon>
        <taxon>Mycobacteriaceae</taxon>
        <taxon>Mycobacterium</taxon>
        <taxon>Mycobacterium tuberculosis complex</taxon>
    </lineage>
</organism>